<name>MOAC_DESAH</name>
<proteinExistence type="inferred from homology"/>
<gene>
    <name evidence="1" type="primary">moaC</name>
    <name type="ordered locus">HRM2_09240</name>
</gene>
<evidence type="ECO:0000255" key="1">
    <source>
        <dbReference type="HAMAP-Rule" id="MF_01224"/>
    </source>
</evidence>
<keyword id="KW-0456">Lyase</keyword>
<keyword id="KW-0501">Molybdenum cofactor biosynthesis</keyword>
<keyword id="KW-1185">Reference proteome</keyword>
<dbReference type="EC" id="4.6.1.17" evidence="1"/>
<dbReference type="EMBL" id="CP001087">
    <property type="protein sequence ID" value="ACN14037.1"/>
    <property type="molecule type" value="Genomic_DNA"/>
</dbReference>
<dbReference type="RefSeq" id="WP_012663277.1">
    <property type="nucleotide sequence ID" value="NC_012108.1"/>
</dbReference>
<dbReference type="SMR" id="C0QKG6"/>
<dbReference type="STRING" id="177437.HRM2_09240"/>
<dbReference type="KEGG" id="dat:HRM2_09240"/>
<dbReference type="eggNOG" id="COG0315">
    <property type="taxonomic scope" value="Bacteria"/>
</dbReference>
<dbReference type="HOGENOM" id="CLU_074693_1_1_7"/>
<dbReference type="OrthoDB" id="9794429at2"/>
<dbReference type="UniPathway" id="UPA00344"/>
<dbReference type="Proteomes" id="UP000000442">
    <property type="component" value="Chromosome"/>
</dbReference>
<dbReference type="GO" id="GO:0061799">
    <property type="term" value="F:cyclic pyranopterin monophosphate synthase activity"/>
    <property type="evidence" value="ECO:0007669"/>
    <property type="project" value="UniProtKB-UniRule"/>
</dbReference>
<dbReference type="GO" id="GO:0006777">
    <property type="term" value="P:Mo-molybdopterin cofactor biosynthetic process"/>
    <property type="evidence" value="ECO:0007669"/>
    <property type="project" value="UniProtKB-UniRule"/>
</dbReference>
<dbReference type="CDD" id="cd01420">
    <property type="entry name" value="MoaC_PE"/>
    <property type="match status" value="1"/>
</dbReference>
<dbReference type="Gene3D" id="3.30.70.640">
    <property type="entry name" value="Molybdopterin cofactor biosynthesis C (MoaC) domain"/>
    <property type="match status" value="1"/>
</dbReference>
<dbReference type="HAMAP" id="MF_01224_B">
    <property type="entry name" value="MoaC_B"/>
    <property type="match status" value="1"/>
</dbReference>
<dbReference type="InterPro" id="IPR023045">
    <property type="entry name" value="MoaC"/>
</dbReference>
<dbReference type="InterPro" id="IPR047594">
    <property type="entry name" value="MoaC_bact/euk"/>
</dbReference>
<dbReference type="InterPro" id="IPR036522">
    <property type="entry name" value="MoaC_sf"/>
</dbReference>
<dbReference type="InterPro" id="IPR050105">
    <property type="entry name" value="MoCo_biosynth_MoaA/MoaC"/>
</dbReference>
<dbReference type="InterPro" id="IPR002820">
    <property type="entry name" value="Mopterin_CF_biosynth-C_dom"/>
</dbReference>
<dbReference type="NCBIfam" id="TIGR00581">
    <property type="entry name" value="moaC"/>
    <property type="match status" value="1"/>
</dbReference>
<dbReference type="NCBIfam" id="NF006870">
    <property type="entry name" value="PRK09364.1"/>
    <property type="match status" value="1"/>
</dbReference>
<dbReference type="PANTHER" id="PTHR22960:SF29">
    <property type="entry name" value="CYCLIC PYRANOPTERIN MONOPHOSPHATE SYNTHASE"/>
    <property type="match status" value="1"/>
</dbReference>
<dbReference type="PANTHER" id="PTHR22960">
    <property type="entry name" value="MOLYBDOPTERIN COFACTOR SYNTHESIS PROTEIN A"/>
    <property type="match status" value="1"/>
</dbReference>
<dbReference type="Pfam" id="PF01967">
    <property type="entry name" value="MoaC"/>
    <property type="match status" value="1"/>
</dbReference>
<dbReference type="SUPFAM" id="SSF55040">
    <property type="entry name" value="Molybdenum cofactor biosynthesis protein C, MoaC"/>
    <property type="match status" value="1"/>
</dbReference>
<reference key="1">
    <citation type="journal article" date="2009" name="Environ. Microbiol.">
        <title>Genome sequence of Desulfobacterium autotrophicum HRM2, a marine sulfate reducer oxidizing organic carbon completely to carbon dioxide.</title>
        <authorList>
            <person name="Strittmatter A.W."/>
            <person name="Liesegang H."/>
            <person name="Rabus R."/>
            <person name="Decker I."/>
            <person name="Amann J."/>
            <person name="Andres S."/>
            <person name="Henne A."/>
            <person name="Fricke W.F."/>
            <person name="Martinez-Arias R."/>
            <person name="Bartels D."/>
            <person name="Goesmann A."/>
            <person name="Krause L."/>
            <person name="Puehler A."/>
            <person name="Klenk H.P."/>
            <person name="Richter M."/>
            <person name="Schuler M."/>
            <person name="Gloeckner F.O."/>
            <person name="Meyerdierks A."/>
            <person name="Gottschalk G."/>
            <person name="Amann R."/>
        </authorList>
    </citation>
    <scope>NUCLEOTIDE SEQUENCE [LARGE SCALE GENOMIC DNA]</scope>
    <source>
        <strain>ATCC 43914 / DSM 3382 / VKM B-1955 / HRM2</strain>
    </source>
</reference>
<sequence>MTDFTHLDDQGRVRMVDVAGKDVTRRVAIARGRIDMTADTLDRIFGRNVKKGNVLEAARIAGVMAAKRTADLIPMCHPLNLTHVRVDFFPDPGHNRIEIEAEASLAGRTGVEMEALTAVSVAALTIYDMCKSYDKGMIISDIHLKSKTGGKSGTFLADRYGHP</sequence>
<organism>
    <name type="scientific">Desulforapulum autotrophicum (strain ATCC 43914 / DSM 3382 / VKM B-1955 / HRM2)</name>
    <name type="common">Desulfobacterium autotrophicum</name>
    <dbReference type="NCBI Taxonomy" id="177437"/>
    <lineage>
        <taxon>Bacteria</taxon>
        <taxon>Pseudomonadati</taxon>
        <taxon>Thermodesulfobacteriota</taxon>
        <taxon>Desulfobacteria</taxon>
        <taxon>Desulfobacterales</taxon>
        <taxon>Desulfobacteraceae</taxon>
        <taxon>Desulforapulum</taxon>
    </lineage>
</organism>
<accession>C0QKG6</accession>
<feature type="chain" id="PRO_1000213985" description="Cyclic pyranopterin monophosphate synthase">
    <location>
        <begin position="1"/>
        <end position="163"/>
    </location>
</feature>
<feature type="active site" evidence="1">
    <location>
        <position position="128"/>
    </location>
</feature>
<feature type="binding site" evidence="1">
    <location>
        <begin position="75"/>
        <end position="77"/>
    </location>
    <ligand>
        <name>substrate</name>
    </ligand>
</feature>
<feature type="binding site" evidence="1">
    <location>
        <begin position="113"/>
        <end position="114"/>
    </location>
    <ligand>
        <name>substrate</name>
    </ligand>
</feature>
<protein>
    <recommendedName>
        <fullName evidence="1">Cyclic pyranopterin monophosphate synthase</fullName>
        <ecNumber evidence="1">4.6.1.17</ecNumber>
    </recommendedName>
    <alternativeName>
        <fullName evidence="1">Molybdenum cofactor biosynthesis protein C</fullName>
    </alternativeName>
</protein>
<comment type="function">
    <text evidence="1">Catalyzes the conversion of (8S)-3',8-cyclo-7,8-dihydroguanosine 5'-triphosphate to cyclic pyranopterin monophosphate (cPMP).</text>
</comment>
<comment type="catalytic activity">
    <reaction evidence="1">
        <text>(8S)-3',8-cyclo-7,8-dihydroguanosine 5'-triphosphate = cyclic pyranopterin phosphate + diphosphate</text>
        <dbReference type="Rhea" id="RHEA:49580"/>
        <dbReference type="ChEBI" id="CHEBI:33019"/>
        <dbReference type="ChEBI" id="CHEBI:59648"/>
        <dbReference type="ChEBI" id="CHEBI:131766"/>
        <dbReference type="EC" id="4.6.1.17"/>
    </reaction>
</comment>
<comment type="pathway">
    <text evidence="1">Cofactor biosynthesis; molybdopterin biosynthesis.</text>
</comment>
<comment type="subunit">
    <text evidence="1">Homohexamer; trimer of dimers.</text>
</comment>
<comment type="similarity">
    <text evidence="1">Belongs to the MoaC family.</text>
</comment>